<gene>
    <name evidence="6" type="primary">CHL1</name>
    <name evidence="8" type="ordered locus">At5g40090</name>
    <name evidence="9" type="ORF">MUD12.6</name>
</gene>
<organism>
    <name type="scientific">Arabidopsis thaliana</name>
    <name type="common">Mouse-ear cress</name>
    <dbReference type="NCBI Taxonomy" id="3702"/>
    <lineage>
        <taxon>Eukaryota</taxon>
        <taxon>Viridiplantae</taxon>
        <taxon>Streptophyta</taxon>
        <taxon>Embryophyta</taxon>
        <taxon>Tracheophyta</taxon>
        <taxon>Spermatophyta</taxon>
        <taxon>Magnoliopsida</taxon>
        <taxon>eudicotyledons</taxon>
        <taxon>Gunneridae</taxon>
        <taxon>Pentapetalae</taxon>
        <taxon>rosids</taxon>
        <taxon>malvids</taxon>
        <taxon>Brassicales</taxon>
        <taxon>Brassicaceae</taxon>
        <taxon>Camelineae</taxon>
        <taxon>Arabidopsis</taxon>
    </lineage>
</organism>
<accession>Q9LUJ8</accession>
<accession>Q4V3A4</accession>
<keyword id="KW-0963">Cytoplasm</keyword>
<keyword id="KW-0378">Hydrolase</keyword>
<keyword id="KW-0520">NAD</keyword>
<keyword id="KW-1185">Reference proteome</keyword>
<reference key="1">
    <citation type="journal article" date="2000" name="DNA Res.">
        <title>Structural analysis of Arabidopsis thaliana chromosome 5. X. Sequence features of the regions of 3,076,755 bp covered by sixty P1 and TAC clones.</title>
        <authorList>
            <person name="Sato S."/>
            <person name="Nakamura Y."/>
            <person name="Kaneko T."/>
            <person name="Katoh T."/>
            <person name="Asamizu E."/>
            <person name="Kotani H."/>
            <person name="Tabata S."/>
        </authorList>
    </citation>
    <scope>NUCLEOTIDE SEQUENCE [LARGE SCALE GENOMIC DNA]</scope>
    <source>
        <strain>cv. Columbia</strain>
    </source>
</reference>
<reference key="2">
    <citation type="journal article" date="2017" name="Plant J.">
        <title>Araport11: a complete reannotation of the Arabidopsis thaliana reference genome.</title>
        <authorList>
            <person name="Cheng C.Y."/>
            <person name="Krishnakumar V."/>
            <person name="Chan A.P."/>
            <person name="Thibaud-Nissen F."/>
            <person name="Schobel S."/>
            <person name="Town C.D."/>
        </authorList>
    </citation>
    <scope>GENOME REANNOTATION</scope>
    <source>
        <strain>cv. Columbia</strain>
    </source>
</reference>
<reference key="3">
    <citation type="submission" date="2006-10" db="EMBL/GenBank/DDBJ databases">
        <title>Arabidopsis ORF Clones.</title>
        <authorList>
            <person name="Quinitio C."/>
            <person name="Chen H."/>
            <person name="Kim C.J."/>
            <person name="Shinn P."/>
            <person name="Ecker J.R."/>
        </authorList>
    </citation>
    <scope>NUCLEOTIDE SEQUENCE [LARGE SCALE MRNA] OF 50-459</scope>
    <source>
        <strain>cv. Columbia</strain>
    </source>
</reference>
<reference key="4">
    <citation type="journal article" date="2002" name="Plant J.">
        <title>TIR-X and TIR-NBS proteins: two new families related to disease resistance TIR-NBS-LRR proteins encoded in Arabidopsis and other plant genomes.</title>
        <authorList>
            <person name="Meyers B.C."/>
            <person name="Morgante M."/>
            <person name="Michelmore R.W."/>
        </authorList>
    </citation>
    <scope>GENE FAMILY</scope>
</reference>
<reference key="5">
    <citation type="journal article" date="2013" name="Plant J.">
        <title>A TIR-NBS protein encoded by Arabidopsis CHILLING SENSITIVE 1 (CHS1) limits chloroplast damage and cell death at low temperature.</title>
        <authorList>
            <person name="Zbierzak A.M."/>
            <person name="Porfirova S."/>
            <person name="Griebel T."/>
            <person name="Melzer M."/>
            <person name="Parker J.E."/>
            <person name="Doermann P."/>
        </authorList>
    </citation>
    <scope>FUNCTION</scope>
    <scope>TISSUE SPECIFICITY</scope>
    <source>
        <strain>cv. Columbia</strain>
    </source>
</reference>
<evidence type="ECO:0000250" key="1">
    <source>
        <dbReference type="UniProtKB" id="F4I902"/>
    </source>
</evidence>
<evidence type="ECO:0000255" key="2"/>
<evidence type="ECO:0000255" key="3">
    <source>
        <dbReference type="PROSITE-ProRule" id="PRU00204"/>
    </source>
</evidence>
<evidence type="ECO:0000256" key="4">
    <source>
        <dbReference type="SAM" id="MobiDB-lite"/>
    </source>
</evidence>
<evidence type="ECO:0000269" key="5">
    <source>
    </source>
</evidence>
<evidence type="ECO:0000303" key="6">
    <source>
    </source>
</evidence>
<evidence type="ECO:0000305" key="7"/>
<evidence type="ECO:0000312" key="8">
    <source>
        <dbReference type="Araport" id="AT5G40090"/>
    </source>
</evidence>
<evidence type="ECO:0000312" key="9">
    <source>
        <dbReference type="EMBL" id="BAA97356.1"/>
    </source>
</evidence>
<protein>
    <recommendedName>
        <fullName evidence="6">Disease resistance protein CHL1</fullName>
        <ecNumber evidence="3">3.2.2.6</ecNumber>
    </recommendedName>
    <alternativeName>
        <fullName evidence="6">Protein CHILLING SENSITIVE 1-LIKE 1</fullName>
        <shortName evidence="6">CHS1-LIKE 1</shortName>
    </alternativeName>
</protein>
<feature type="chain" id="PRO_0000438138" description="Disease resistance protein CHL1">
    <location>
        <begin position="1"/>
        <end position="459"/>
    </location>
</feature>
<feature type="domain" description="TIR" evidence="3">
    <location>
        <begin position="16"/>
        <end position="170"/>
    </location>
</feature>
<feature type="domain" description="NB-ARC" evidence="2">
    <location>
        <begin position="191"/>
        <end position="401"/>
    </location>
</feature>
<feature type="region of interest" description="Disordered" evidence="4">
    <location>
        <begin position="429"/>
        <end position="459"/>
    </location>
</feature>
<feature type="compositionally biased region" description="Basic and acidic residues" evidence="4">
    <location>
        <begin position="429"/>
        <end position="440"/>
    </location>
</feature>
<feature type="active site" evidence="3">
    <location>
        <position position="89"/>
    </location>
</feature>
<feature type="sequence conflict" description="In Ref. 3; AAY56443." evidence="7" ref="3">
    <original>L</original>
    <variation>S</variation>
    <location>
        <position position="51"/>
    </location>
</feature>
<proteinExistence type="evidence at transcript level"/>
<name>CHL1_ARATH</name>
<sequence length="459" mass="51655">MSSASSSSAASLLLGREVDVFLSFCCQTSHGYFQNILIRNGIRTFLSYRCLEKRFGPIGQRTLKALEESRVAVVMTSTTKPCSVGFLEELLVILEFQEKGSLMVIPIFLTDLSFNVEEICRQHPEKAPSWRTALTKLTNLAAEYPLSQNLAGMDQSDLLNQIARDISLVVFYSGSNDSNALVAMDRHMKVVYDLLALEVNKEVRTIGIWGSAGVGKTTLARYIYAEIFVNFQTHVFLDNVENMKDKLLKFEGEEDPTVIISSYHDGHEITEARRKHRKILLIADDVNNMEQGKWIIEYANWFAPGSRVILISQNKNLLVDAGVMDVYEVRSLRYDEALQVFSHFAFKQPYPPSDFEELAVRAVHLAGFLPLGLRLLGSFLAGKGREEWVAALLKLKAKQGGHIMEVWKLMEATDDKGLEEWETAADIVERKESSQDKSQQESEVAADILIGKESSQDKQ</sequence>
<dbReference type="EC" id="3.2.2.6" evidence="3"/>
<dbReference type="EMBL" id="AB022222">
    <property type="protein sequence ID" value="BAA97356.1"/>
    <property type="molecule type" value="Genomic_DNA"/>
</dbReference>
<dbReference type="EMBL" id="CP002688">
    <property type="protein sequence ID" value="AED94509.1"/>
    <property type="molecule type" value="Genomic_DNA"/>
</dbReference>
<dbReference type="EMBL" id="BT023452">
    <property type="protein sequence ID" value="AAY56443.1"/>
    <property type="status" value="ALT_INIT"/>
    <property type="molecule type" value="mRNA"/>
</dbReference>
<dbReference type="EMBL" id="BT029233">
    <property type="protein sequence ID" value="ABJ98565.1"/>
    <property type="molecule type" value="mRNA"/>
</dbReference>
<dbReference type="RefSeq" id="NP_198825.3">
    <property type="nucleotide sequence ID" value="NM_123372.4"/>
</dbReference>
<dbReference type="SMR" id="Q9LUJ8"/>
<dbReference type="FunCoup" id="Q9LUJ8">
    <property type="interactions" value="4"/>
</dbReference>
<dbReference type="STRING" id="3702.Q9LUJ8"/>
<dbReference type="PaxDb" id="3702-AT5G40090.1"/>
<dbReference type="ProteomicsDB" id="246995"/>
<dbReference type="EnsemblPlants" id="AT5G40090.1">
    <property type="protein sequence ID" value="AT5G40090.1"/>
    <property type="gene ID" value="AT5G40090"/>
</dbReference>
<dbReference type="GeneID" id="834006"/>
<dbReference type="Gramene" id="AT5G40090.1">
    <property type="protein sequence ID" value="AT5G40090.1"/>
    <property type="gene ID" value="AT5G40090"/>
</dbReference>
<dbReference type="KEGG" id="ath:AT5G40090"/>
<dbReference type="Araport" id="AT5G40090"/>
<dbReference type="TAIR" id="AT5G40090">
    <property type="gene designation" value="CHL1"/>
</dbReference>
<dbReference type="HOGENOM" id="CLU_001561_2_3_1"/>
<dbReference type="InParanoid" id="Q9LUJ8"/>
<dbReference type="OMA" id="LSFCCET"/>
<dbReference type="PhylomeDB" id="Q9LUJ8"/>
<dbReference type="PRO" id="PR:Q9LUJ8"/>
<dbReference type="Proteomes" id="UP000006548">
    <property type="component" value="Chromosome 5"/>
</dbReference>
<dbReference type="ExpressionAtlas" id="Q9LUJ8">
    <property type="expression patterns" value="baseline and differential"/>
</dbReference>
<dbReference type="GO" id="GO:0005737">
    <property type="term" value="C:cytoplasm"/>
    <property type="evidence" value="ECO:0007669"/>
    <property type="project" value="UniProtKB-SubCell"/>
</dbReference>
<dbReference type="GO" id="GO:0043531">
    <property type="term" value="F:ADP binding"/>
    <property type="evidence" value="ECO:0007669"/>
    <property type="project" value="InterPro"/>
</dbReference>
<dbReference type="GO" id="GO:0016887">
    <property type="term" value="F:ATP hydrolysis activity"/>
    <property type="evidence" value="ECO:0007669"/>
    <property type="project" value="InterPro"/>
</dbReference>
<dbReference type="GO" id="GO:0061809">
    <property type="term" value="F:NAD+ nucleosidase activity, cyclic ADP-ribose generating"/>
    <property type="evidence" value="ECO:0007669"/>
    <property type="project" value="UniProtKB-EC"/>
</dbReference>
<dbReference type="GO" id="GO:0006952">
    <property type="term" value="P:defense response"/>
    <property type="evidence" value="ECO:0007669"/>
    <property type="project" value="InterPro"/>
</dbReference>
<dbReference type="GO" id="GO:0007165">
    <property type="term" value="P:signal transduction"/>
    <property type="evidence" value="ECO:0007669"/>
    <property type="project" value="InterPro"/>
</dbReference>
<dbReference type="Gene3D" id="1.10.8.430">
    <property type="entry name" value="Helical domain of apoptotic protease-activating factors"/>
    <property type="match status" value="1"/>
</dbReference>
<dbReference type="Gene3D" id="3.40.50.300">
    <property type="entry name" value="P-loop containing nucleotide triphosphate hydrolases"/>
    <property type="match status" value="1"/>
</dbReference>
<dbReference type="Gene3D" id="3.40.50.10140">
    <property type="entry name" value="Toll/interleukin-1 receptor homology (TIR) domain"/>
    <property type="match status" value="1"/>
</dbReference>
<dbReference type="InterPro" id="IPR003593">
    <property type="entry name" value="AAA+_ATPase"/>
</dbReference>
<dbReference type="InterPro" id="IPR042197">
    <property type="entry name" value="Apaf_helical"/>
</dbReference>
<dbReference type="InterPro" id="IPR044974">
    <property type="entry name" value="Disease_R_plants"/>
</dbReference>
<dbReference type="InterPro" id="IPR002182">
    <property type="entry name" value="NB-ARC"/>
</dbReference>
<dbReference type="InterPro" id="IPR027417">
    <property type="entry name" value="P-loop_NTPase"/>
</dbReference>
<dbReference type="InterPro" id="IPR000157">
    <property type="entry name" value="TIR_dom"/>
</dbReference>
<dbReference type="InterPro" id="IPR035897">
    <property type="entry name" value="Toll_tir_struct_dom_sf"/>
</dbReference>
<dbReference type="PANTHER" id="PTHR11017:SF559">
    <property type="entry name" value="DISEASE RESISTANCE PROTEIN CHL1"/>
    <property type="match status" value="1"/>
</dbReference>
<dbReference type="PANTHER" id="PTHR11017">
    <property type="entry name" value="LEUCINE-RICH REPEAT-CONTAINING PROTEIN"/>
    <property type="match status" value="1"/>
</dbReference>
<dbReference type="Pfam" id="PF00931">
    <property type="entry name" value="NB-ARC"/>
    <property type="match status" value="1"/>
</dbReference>
<dbReference type="Pfam" id="PF01582">
    <property type="entry name" value="TIR"/>
    <property type="match status" value="1"/>
</dbReference>
<dbReference type="PRINTS" id="PR00364">
    <property type="entry name" value="DISEASERSIST"/>
</dbReference>
<dbReference type="SMART" id="SM00382">
    <property type="entry name" value="AAA"/>
    <property type="match status" value="1"/>
</dbReference>
<dbReference type="SUPFAM" id="SSF52540">
    <property type="entry name" value="P-loop containing nucleoside triphosphate hydrolases"/>
    <property type="match status" value="1"/>
</dbReference>
<dbReference type="SUPFAM" id="SSF52200">
    <property type="entry name" value="Toll/Interleukin receptor TIR domain"/>
    <property type="match status" value="1"/>
</dbReference>
<dbReference type="PROSITE" id="PS50104">
    <property type="entry name" value="TIR"/>
    <property type="match status" value="1"/>
</dbReference>
<comment type="function">
    <text evidence="5">Confers resistance to low temperatures by limiting chloroplast damage and cell death, thus maintaining growth homeostasis.</text>
</comment>
<comment type="catalytic activity">
    <reaction evidence="3">
        <text>NAD(+) + H2O = ADP-D-ribose + nicotinamide + H(+)</text>
        <dbReference type="Rhea" id="RHEA:16301"/>
        <dbReference type="ChEBI" id="CHEBI:15377"/>
        <dbReference type="ChEBI" id="CHEBI:15378"/>
        <dbReference type="ChEBI" id="CHEBI:17154"/>
        <dbReference type="ChEBI" id="CHEBI:57540"/>
        <dbReference type="ChEBI" id="CHEBI:57967"/>
        <dbReference type="EC" id="3.2.2.6"/>
    </reaction>
    <physiologicalReaction direction="left-to-right" evidence="3">
        <dbReference type="Rhea" id="RHEA:16302"/>
    </physiologicalReaction>
</comment>
<comment type="subcellular location">
    <subcellularLocation>
        <location evidence="1">Cytoplasm</location>
    </subcellularLocation>
</comment>
<comment type="tissue specificity">
    <text evidence="5">Mostly expressed in leaves, stems and roots, and, to a lower extent, in flowers and siliques.</text>
</comment>
<comment type="domain">
    <text evidence="3">The TIR domain mediates NAD(+) hydrolase (NADase) activity. Self-association of TIR domains is required for NADase activity.</text>
</comment>
<comment type="sequence caution" evidence="7">
    <conflict type="erroneous initiation">
        <sequence resource="EMBL-CDS" id="AAY56443"/>
    </conflict>
    <text>Truncated N-terminus.</text>
</comment>